<name>ACP_DESAP</name>
<reference key="1">
    <citation type="submission" date="2007-10" db="EMBL/GenBank/DDBJ databases">
        <title>Complete sequence of chromosome of Desulforudis audaxviator MP104C.</title>
        <authorList>
            <person name="Copeland A."/>
            <person name="Lucas S."/>
            <person name="Lapidus A."/>
            <person name="Barry K."/>
            <person name="Glavina del Rio T."/>
            <person name="Dalin E."/>
            <person name="Tice H."/>
            <person name="Bruce D."/>
            <person name="Pitluck S."/>
            <person name="Lowry S.R."/>
            <person name="Larimer F."/>
            <person name="Land M.L."/>
            <person name="Hauser L."/>
            <person name="Kyrpides N."/>
            <person name="Ivanova N.N."/>
            <person name="Richardson P."/>
        </authorList>
    </citation>
    <scope>NUCLEOTIDE SEQUENCE [LARGE SCALE GENOMIC DNA]</scope>
    <source>
        <strain>MP104C</strain>
    </source>
</reference>
<comment type="function">
    <text evidence="1">Carrier of the growing fatty acid chain in fatty acid biosynthesis.</text>
</comment>
<comment type="pathway">
    <text evidence="1">Lipid metabolism; fatty acid biosynthesis.</text>
</comment>
<comment type="subcellular location">
    <subcellularLocation>
        <location evidence="1">Cytoplasm</location>
    </subcellularLocation>
</comment>
<comment type="PTM">
    <text evidence="1">4'-phosphopantetheine is transferred from CoA to a specific serine of apo-ACP by AcpS. This modification is essential for activity because fatty acids are bound in thioester linkage to the sulfhydryl of the prosthetic group.</text>
</comment>
<comment type="similarity">
    <text evidence="1">Belongs to the acyl carrier protein (ACP) family.</text>
</comment>
<proteinExistence type="inferred from homology"/>
<accession>B1I2D2</accession>
<keyword id="KW-0963">Cytoplasm</keyword>
<keyword id="KW-0275">Fatty acid biosynthesis</keyword>
<keyword id="KW-0276">Fatty acid metabolism</keyword>
<keyword id="KW-0444">Lipid biosynthesis</keyword>
<keyword id="KW-0443">Lipid metabolism</keyword>
<keyword id="KW-0596">Phosphopantetheine</keyword>
<keyword id="KW-0597">Phosphoprotein</keyword>
<keyword id="KW-1185">Reference proteome</keyword>
<dbReference type="EMBL" id="CP000860">
    <property type="protein sequence ID" value="ACA59177.1"/>
    <property type="molecule type" value="Genomic_DNA"/>
</dbReference>
<dbReference type="RefSeq" id="WP_012301765.1">
    <property type="nucleotide sequence ID" value="NC_010424.1"/>
</dbReference>
<dbReference type="SMR" id="B1I2D2"/>
<dbReference type="STRING" id="477974.Daud_0643"/>
<dbReference type="KEGG" id="dau:Daud_0643"/>
<dbReference type="eggNOG" id="COG0236">
    <property type="taxonomic scope" value="Bacteria"/>
</dbReference>
<dbReference type="HOGENOM" id="CLU_108696_5_1_9"/>
<dbReference type="OrthoDB" id="9804551at2"/>
<dbReference type="UniPathway" id="UPA00094"/>
<dbReference type="Proteomes" id="UP000008544">
    <property type="component" value="Chromosome"/>
</dbReference>
<dbReference type="GO" id="GO:0005829">
    <property type="term" value="C:cytosol"/>
    <property type="evidence" value="ECO:0007669"/>
    <property type="project" value="TreeGrafter"/>
</dbReference>
<dbReference type="GO" id="GO:0016020">
    <property type="term" value="C:membrane"/>
    <property type="evidence" value="ECO:0007669"/>
    <property type="project" value="GOC"/>
</dbReference>
<dbReference type="GO" id="GO:0000035">
    <property type="term" value="F:acyl binding"/>
    <property type="evidence" value="ECO:0007669"/>
    <property type="project" value="TreeGrafter"/>
</dbReference>
<dbReference type="GO" id="GO:0000036">
    <property type="term" value="F:acyl carrier activity"/>
    <property type="evidence" value="ECO:0007669"/>
    <property type="project" value="UniProtKB-UniRule"/>
</dbReference>
<dbReference type="GO" id="GO:0031177">
    <property type="term" value="F:phosphopantetheine binding"/>
    <property type="evidence" value="ECO:0007669"/>
    <property type="project" value="InterPro"/>
</dbReference>
<dbReference type="GO" id="GO:0009245">
    <property type="term" value="P:lipid A biosynthetic process"/>
    <property type="evidence" value="ECO:0007669"/>
    <property type="project" value="TreeGrafter"/>
</dbReference>
<dbReference type="FunFam" id="1.10.1200.10:FF:000001">
    <property type="entry name" value="Acyl carrier protein"/>
    <property type="match status" value="1"/>
</dbReference>
<dbReference type="Gene3D" id="1.10.1200.10">
    <property type="entry name" value="ACP-like"/>
    <property type="match status" value="1"/>
</dbReference>
<dbReference type="HAMAP" id="MF_01217">
    <property type="entry name" value="Acyl_carrier"/>
    <property type="match status" value="1"/>
</dbReference>
<dbReference type="InterPro" id="IPR003231">
    <property type="entry name" value="ACP"/>
</dbReference>
<dbReference type="InterPro" id="IPR036736">
    <property type="entry name" value="ACP-like_sf"/>
</dbReference>
<dbReference type="InterPro" id="IPR020806">
    <property type="entry name" value="PKS_PP-bd"/>
</dbReference>
<dbReference type="InterPro" id="IPR009081">
    <property type="entry name" value="PP-bd_ACP"/>
</dbReference>
<dbReference type="InterPro" id="IPR006162">
    <property type="entry name" value="Ppantetheine_attach_site"/>
</dbReference>
<dbReference type="NCBIfam" id="TIGR00517">
    <property type="entry name" value="acyl_carrier"/>
    <property type="match status" value="1"/>
</dbReference>
<dbReference type="NCBIfam" id="NF002148">
    <property type="entry name" value="PRK00982.1-2"/>
    <property type="match status" value="1"/>
</dbReference>
<dbReference type="NCBIfam" id="NF002149">
    <property type="entry name" value="PRK00982.1-3"/>
    <property type="match status" value="1"/>
</dbReference>
<dbReference type="NCBIfam" id="NF002150">
    <property type="entry name" value="PRK00982.1-4"/>
    <property type="match status" value="1"/>
</dbReference>
<dbReference type="NCBIfam" id="NF002151">
    <property type="entry name" value="PRK00982.1-5"/>
    <property type="match status" value="1"/>
</dbReference>
<dbReference type="PANTHER" id="PTHR20863">
    <property type="entry name" value="ACYL CARRIER PROTEIN"/>
    <property type="match status" value="1"/>
</dbReference>
<dbReference type="PANTHER" id="PTHR20863:SF76">
    <property type="entry name" value="CARRIER DOMAIN-CONTAINING PROTEIN"/>
    <property type="match status" value="1"/>
</dbReference>
<dbReference type="Pfam" id="PF00550">
    <property type="entry name" value="PP-binding"/>
    <property type="match status" value="1"/>
</dbReference>
<dbReference type="SMART" id="SM00823">
    <property type="entry name" value="PKS_PP"/>
    <property type="match status" value="1"/>
</dbReference>
<dbReference type="SUPFAM" id="SSF47336">
    <property type="entry name" value="ACP-like"/>
    <property type="match status" value="1"/>
</dbReference>
<dbReference type="PROSITE" id="PS50075">
    <property type="entry name" value="CARRIER"/>
    <property type="match status" value="1"/>
</dbReference>
<dbReference type="PROSITE" id="PS00012">
    <property type="entry name" value="PHOSPHOPANTETHEINE"/>
    <property type="match status" value="1"/>
</dbReference>
<feature type="chain" id="PRO_1000139019" description="Acyl carrier protein">
    <location>
        <begin position="1"/>
        <end position="77"/>
    </location>
</feature>
<feature type="domain" description="Carrier" evidence="2">
    <location>
        <begin position="2"/>
        <end position="77"/>
    </location>
</feature>
<feature type="modified residue" description="O-(pantetheine 4'-phosphoryl)serine" evidence="2">
    <location>
        <position position="37"/>
    </location>
</feature>
<organism>
    <name type="scientific">Desulforudis audaxviator (strain MP104C)</name>
    <dbReference type="NCBI Taxonomy" id="477974"/>
    <lineage>
        <taxon>Bacteria</taxon>
        <taxon>Bacillati</taxon>
        <taxon>Bacillota</taxon>
        <taxon>Clostridia</taxon>
        <taxon>Thermoanaerobacterales</taxon>
        <taxon>Candidatus Desulforudaceae</taxon>
        <taxon>Candidatus Desulforudis</taxon>
    </lineage>
</organism>
<protein>
    <recommendedName>
        <fullName evidence="1">Acyl carrier protein</fullName>
        <shortName evidence="1">ACP</shortName>
    </recommendedName>
</protein>
<sequence>MSEKLQKIQALIVEQLGVDEEEVTPEASFVDDLGADSLDLVELVMAFEEAFEIRIPDEDAEKIRTVGDAVAYIEERS</sequence>
<gene>
    <name evidence="1" type="primary">acpP</name>
    <name type="ordered locus">Daud_0643</name>
</gene>
<evidence type="ECO:0000255" key="1">
    <source>
        <dbReference type="HAMAP-Rule" id="MF_01217"/>
    </source>
</evidence>
<evidence type="ECO:0000255" key="2">
    <source>
        <dbReference type="PROSITE-ProRule" id="PRU00258"/>
    </source>
</evidence>